<evidence type="ECO:0000255" key="1">
    <source>
        <dbReference type="HAMAP-Rule" id="MF_01407"/>
    </source>
</evidence>
<organism>
    <name type="scientific">Haloarcula marismortui (strain ATCC 43049 / DSM 3752 / JCM 8966 / VKM B-1809)</name>
    <name type="common">Halobacterium marismortui</name>
    <dbReference type="NCBI Taxonomy" id="272569"/>
    <lineage>
        <taxon>Archaea</taxon>
        <taxon>Methanobacteriati</taxon>
        <taxon>Methanobacteriota</taxon>
        <taxon>Stenosarchaea group</taxon>
        <taxon>Halobacteria</taxon>
        <taxon>Halobacteriales</taxon>
        <taxon>Haloarculaceae</taxon>
        <taxon>Haloarcula</taxon>
    </lineage>
</organism>
<reference key="1">
    <citation type="journal article" date="2004" name="Genome Res.">
        <title>Genome sequence of Haloarcula marismortui: a halophilic archaeon from the Dead Sea.</title>
        <authorList>
            <person name="Baliga N.S."/>
            <person name="Bonneau R."/>
            <person name="Facciotti M.T."/>
            <person name="Pan M."/>
            <person name="Glusman G."/>
            <person name="Deutsch E.W."/>
            <person name="Shannon P."/>
            <person name="Chiu Y."/>
            <person name="Weng R.S."/>
            <person name="Gan R.R."/>
            <person name="Hung P."/>
            <person name="Date S.V."/>
            <person name="Marcotte E."/>
            <person name="Hood L."/>
            <person name="Ng W.V."/>
        </authorList>
    </citation>
    <scope>NUCLEOTIDE SEQUENCE [LARGE SCALE GENOMIC DNA]</scope>
    <source>
        <strain>ATCC 43049 / DSM 3752 / JCM 8966 / VKM B-1809</strain>
    </source>
</reference>
<sequence length="402" mass="44584">MDSDDESEAVHSVFNTVSQEGGKIFEQREILQIDYVPSENRIVGRDEQIEKVAGEIGPIVVGQPPNSIIIYGKTGCGKSLVAKHVSKIAREEAENRGVKLATGYVNCQQAKGNSDALSKYGRAINPPESGVKFPTRGISENEYFERVWSVLNEFYDAAIIVLDEVDKLNNDDLLMALSRAGEDGSVDVPIGVIAVSNKINYRDKMSERTKSSFGHNEFIFEPYDADQIREILQNRTDAFADGVLDDGVIPRAAALSAKEHGDARKAMRLLRYAGDQANKENAERVKESHLTDARASAEVDRLLELISGLPPHSKHVLLALANLTKNHPDREWFRTVRVREIYLEVCDRSGADPLSAERTRQLLNELCFLEVAGSRRGTGEGKGHYSQYTLLWDADIVLTLGN</sequence>
<proteinExistence type="inferred from homology"/>
<gene>
    <name type="primary">cdc6q</name>
    <name type="ordered locus">pNG1024</name>
</gene>
<feature type="chain" id="PRO_0000150991" description="ORC1-type DNA replication protein 17">
    <location>
        <begin position="1"/>
        <end position="402"/>
    </location>
</feature>
<feature type="binding site" evidence="1">
    <location>
        <position position="223"/>
    </location>
    <ligand>
        <name>ATP</name>
        <dbReference type="ChEBI" id="CHEBI:30616"/>
    </ligand>
</feature>
<feature type="binding site" evidence="1">
    <location>
        <position position="235"/>
    </location>
    <ligand>
        <name>ATP</name>
        <dbReference type="ChEBI" id="CHEBI:30616"/>
    </ligand>
</feature>
<comment type="function">
    <text evidence="1">Involved in regulation of DNA replication.</text>
</comment>
<comment type="similarity">
    <text evidence="1">Belongs to the CDC6/cdc18 family.</text>
</comment>
<geneLocation type="plasmid">
    <name>pNG100</name>
</geneLocation>
<name>CDC6Q_HALMA</name>
<keyword id="KW-0067">ATP-binding</keyword>
<keyword id="KW-0235">DNA replication</keyword>
<keyword id="KW-0547">Nucleotide-binding</keyword>
<keyword id="KW-0614">Plasmid</keyword>
<keyword id="KW-1185">Reference proteome</keyword>
<protein>
    <recommendedName>
        <fullName evidence="1">ORC1-type DNA replication protein 17</fullName>
    </recommendedName>
</protein>
<dbReference type="EMBL" id="AY596290">
    <property type="protein sequence ID" value="AAV44281.1"/>
    <property type="molecule type" value="Genomic_DNA"/>
</dbReference>
<dbReference type="RefSeq" id="WP_011222135.1">
    <property type="nucleotide sequence ID" value="NC_006389.1"/>
</dbReference>
<dbReference type="SMR" id="Q5V883"/>
<dbReference type="EnsemblBacteria" id="AAV44281">
    <property type="protein sequence ID" value="AAV44281"/>
    <property type="gene ID" value="pNG1024"/>
</dbReference>
<dbReference type="GeneID" id="40150572"/>
<dbReference type="KEGG" id="hma:pNG1024"/>
<dbReference type="PATRIC" id="fig|272569.17.peg.25"/>
<dbReference type="HOGENOM" id="CLU_025112_2_1_2"/>
<dbReference type="Proteomes" id="UP000001169">
    <property type="component" value="Plasmid pNG100"/>
</dbReference>
<dbReference type="GO" id="GO:0005524">
    <property type="term" value="F:ATP binding"/>
    <property type="evidence" value="ECO:0007669"/>
    <property type="project" value="UniProtKB-UniRule"/>
</dbReference>
<dbReference type="GO" id="GO:0016887">
    <property type="term" value="F:ATP hydrolysis activity"/>
    <property type="evidence" value="ECO:0007669"/>
    <property type="project" value="InterPro"/>
</dbReference>
<dbReference type="GO" id="GO:0006260">
    <property type="term" value="P:DNA replication"/>
    <property type="evidence" value="ECO:0007669"/>
    <property type="project" value="UniProtKB-UniRule"/>
</dbReference>
<dbReference type="CDD" id="cd00009">
    <property type="entry name" value="AAA"/>
    <property type="match status" value="1"/>
</dbReference>
<dbReference type="CDD" id="cd08768">
    <property type="entry name" value="Cdc6_C"/>
    <property type="match status" value="1"/>
</dbReference>
<dbReference type="FunFam" id="1.10.8.60:FF:000073">
    <property type="entry name" value="ORC1-type DNA replication protein"/>
    <property type="match status" value="1"/>
</dbReference>
<dbReference type="Gene3D" id="1.10.8.60">
    <property type="match status" value="1"/>
</dbReference>
<dbReference type="Gene3D" id="3.40.50.300">
    <property type="entry name" value="P-loop containing nucleotide triphosphate hydrolases"/>
    <property type="match status" value="1"/>
</dbReference>
<dbReference type="Gene3D" id="1.10.10.10">
    <property type="entry name" value="Winged helix-like DNA-binding domain superfamily/Winged helix DNA-binding domain"/>
    <property type="match status" value="1"/>
</dbReference>
<dbReference type="HAMAP" id="MF_01407">
    <property type="entry name" value="ORC1_type_DNA_replic_protein"/>
    <property type="match status" value="1"/>
</dbReference>
<dbReference type="InterPro" id="IPR003593">
    <property type="entry name" value="AAA+_ATPase"/>
</dbReference>
<dbReference type="InterPro" id="IPR041664">
    <property type="entry name" value="AAA_16"/>
</dbReference>
<dbReference type="InterPro" id="IPR015163">
    <property type="entry name" value="Cdc6_C"/>
</dbReference>
<dbReference type="InterPro" id="IPR055237">
    <property type="entry name" value="Cdc6_lid"/>
</dbReference>
<dbReference type="InterPro" id="IPR050311">
    <property type="entry name" value="ORC1/CDC6"/>
</dbReference>
<dbReference type="InterPro" id="IPR014277">
    <property type="entry name" value="Orc1/Cdc6_arc"/>
</dbReference>
<dbReference type="InterPro" id="IPR027417">
    <property type="entry name" value="P-loop_NTPase"/>
</dbReference>
<dbReference type="InterPro" id="IPR036388">
    <property type="entry name" value="WH-like_DNA-bd_sf"/>
</dbReference>
<dbReference type="InterPro" id="IPR036390">
    <property type="entry name" value="WH_DNA-bd_sf"/>
</dbReference>
<dbReference type="NCBIfam" id="TIGR02928">
    <property type="entry name" value="orc1/cdc6 family replication initiation protein"/>
    <property type="match status" value="1"/>
</dbReference>
<dbReference type="PANTHER" id="PTHR10763">
    <property type="entry name" value="CELL DIVISION CONTROL PROTEIN 6-RELATED"/>
    <property type="match status" value="1"/>
</dbReference>
<dbReference type="PANTHER" id="PTHR10763:SF22">
    <property type="entry name" value="ORC1-TYPE DNA REPLICATION PROTEIN"/>
    <property type="match status" value="1"/>
</dbReference>
<dbReference type="Pfam" id="PF13191">
    <property type="entry name" value="AAA_16"/>
    <property type="match status" value="1"/>
</dbReference>
<dbReference type="Pfam" id="PF09079">
    <property type="entry name" value="Cdc6_C"/>
    <property type="match status" value="1"/>
</dbReference>
<dbReference type="Pfam" id="PF22703">
    <property type="entry name" value="Cdc6_lid"/>
    <property type="match status" value="1"/>
</dbReference>
<dbReference type="SMART" id="SM00382">
    <property type="entry name" value="AAA"/>
    <property type="match status" value="1"/>
</dbReference>
<dbReference type="SMART" id="SM01074">
    <property type="entry name" value="Cdc6_C"/>
    <property type="match status" value="1"/>
</dbReference>
<dbReference type="SUPFAM" id="SSF52540">
    <property type="entry name" value="P-loop containing nucleoside triphosphate hydrolases"/>
    <property type="match status" value="1"/>
</dbReference>
<dbReference type="SUPFAM" id="SSF46785">
    <property type="entry name" value="Winged helix' DNA-binding domain"/>
    <property type="match status" value="1"/>
</dbReference>
<accession>Q5V883</accession>